<keyword id="KW-0131">Cell cycle</keyword>
<keyword id="KW-0132">Cell division</keyword>
<keyword id="KW-0997">Cell inner membrane</keyword>
<keyword id="KW-1003">Cell membrane</keyword>
<keyword id="KW-0133">Cell shape</keyword>
<keyword id="KW-0961">Cell wall biogenesis/degradation</keyword>
<keyword id="KW-0328">Glycosyltransferase</keyword>
<keyword id="KW-0472">Membrane</keyword>
<keyword id="KW-0573">Peptidoglycan synthesis</keyword>
<keyword id="KW-1185">Reference proteome</keyword>
<keyword id="KW-0808">Transferase</keyword>
<keyword id="KW-0812">Transmembrane</keyword>
<keyword id="KW-1133">Transmembrane helix</keyword>
<dbReference type="EC" id="2.4.99.28" evidence="1"/>
<dbReference type="EMBL" id="CP001801">
    <property type="protein sequence ID" value="ACX95306.1"/>
    <property type="molecule type" value="Genomic_DNA"/>
</dbReference>
<dbReference type="RefSeq" id="WP_012823342.1">
    <property type="nucleotide sequence ID" value="NC_013422.1"/>
</dbReference>
<dbReference type="SMR" id="D0KXY3"/>
<dbReference type="STRING" id="555778.Hneap_0449"/>
<dbReference type="KEGG" id="hna:Hneap_0449"/>
<dbReference type="eggNOG" id="COG0772">
    <property type="taxonomic scope" value="Bacteria"/>
</dbReference>
<dbReference type="HOGENOM" id="CLU_029243_1_1_6"/>
<dbReference type="OrthoDB" id="9768187at2"/>
<dbReference type="UniPathway" id="UPA00219"/>
<dbReference type="Proteomes" id="UP000009102">
    <property type="component" value="Chromosome"/>
</dbReference>
<dbReference type="GO" id="GO:0032153">
    <property type="term" value="C:cell division site"/>
    <property type="evidence" value="ECO:0007669"/>
    <property type="project" value="UniProtKB-UniRule"/>
</dbReference>
<dbReference type="GO" id="GO:0005886">
    <property type="term" value="C:plasma membrane"/>
    <property type="evidence" value="ECO:0007669"/>
    <property type="project" value="UniProtKB-SubCell"/>
</dbReference>
<dbReference type="GO" id="GO:0015648">
    <property type="term" value="F:lipid-linked peptidoglycan transporter activity"/>
    <property type="evidence" value="ECO:0007669"/>
    <property type="project" value="TreeGrafter"/>
</dbReference>
<dbReference type="GO" id="GO:0008955">
    <property type="term" value="F:peptidoglycan glycosyltransferase activity"/>
    <property type="evidence" value="ECO:0007669"/>
    <property type="project" value="UniProtKB-UniRule"/>
</dbReference>
<dbReference type="GO" id="GO:0071555">
    <property type="term" value="P:cell wall organization"/>
    <property type="evidence" value="ECO:0007669"/>
    <property type="project" value="UniProtKB-KW"/>
</dbReference>
<dbReference type="GO" id="GO:0043093">
    <property type="term" value="P:FtsZ-dependent cytokinesis"/>
    <property type="evidence" value="ECO:0007669"/>
    <property type="project" value="UniProtKB-UniRule"/>
</dbReference>
<dbReference type="GO" id="GO:0009252">
    <property type="term" value="P:peptidoglycan biosynthetic process"/>
    <property type="evidence" value="ECO:0007669"/>
    <property type="project" value="UniProtKB-UniRule"/>
</dbReference>
<dbReference type="GO" id="GO:0008360">
    <property type="term" value="P:regulation of cell shape"/>
    <property type="evidence" value="ECO:0007669"/>
    <property type="project" value="UniProtKB-KW"/>
</dbReference>
<dbReference type="HAMAP" id="MF_00913">
    <property type="entry name" value="PGT_FtsW_proteobact"/>
    <property type="match status" value="1"/>
</dbReference>
<dbReference type="InterPro" id="IPR018365">
    <property type="entry name" value="Cell_cycle_FtsW-rel_CS"/>
</dbReference>
<dbReference type="InterPro" id="IPR013437">
    <property type="entry name" value="FtsW"/>
</dbReference>
<dbReference type="InterPro" id="IPR001182">
    <property type="entry name" value="FtsW/RodA"/>
</dbReference>
<dbReference type="NCBIfam" id="TIGR02614">
    <property type="entry name" value="ftsW"/>
    <property type="match status" value="1"/>
</dbReference>
<dbReference type="PANTHER" id="PTHR30474">
    <property type="entry name" value="CELL CYCLE PROTEIN"/>
    <property type="match status" value="1"/>
</dbReference>
<dbReference type="PANTHER" id="PTHR30474:SF2">
    <property type="entry name" value="PEPTIDOGLYCAN GLYCOSYLTRANSFERASE FTSW-RELATED"/>
    <property type="match status" value="1"/>
</dbReference>
<dbReference type="Pfam" id="PF01098">
    <property type="entry name" value="FTSW_RODA_SPOVE"/>
    <property type="match status" value="1"/>
</dbReference>
<dbReference type="PROSITE" id="PS00428">
    <property type="entry name" value="FTSW_RODA_SPOVE"/>
    <property type="match status" value="1"/>
</dbReference>
<organism>
    <name type="scientific">Halothiobacillus neapolitanus (strain ATCC 23641 / c2)</name>
    <name type="common">Thiobacillus neapolitanus</name>
    <dbReference type="NCBI Taxonomy" id="555778"/>
    <lineage>
        <taxon>Bacteria</taxon>
        <taxon>Pseudomonadati</taxon>
        <taxon>Pseudomonadota</taxon>
        <taxon>Gammaproteobacteria</taxon>
        <taxon>Chromatiales</taxon>
        <taxon>Halothiobacillaceae</taxon>
        <taxon>Halothiobacillus</taxon>
    </lineage>
</organism>
<feature type="chain" id="PRO_0000415191" description="Probable peptidoglycan glycosyltransferase FtsW">
    <location>
        <begin position="1"/>
        <end position="415"/>
    </location>
</feature>
<feature type="transmembrane region" description="Helical" evidence="1">
    <location>
        <begin position="31"/>
        <end position="51"/>
    </location>
</feature>
<feature type="transmembrane region" description="Helical" evidence="1">
    <location>
        <begin position="63"/>
        <end position="83"/>
    </location>
</feature>
<feature type="transmembrane region" description="Helical" evidence="1">
    <location>
        <begin position="97"/>
        <end position="117"/>
    </location>
</feature>
<feature type="transmembrane region" description="Helical" evidence="1">
    <location>
        <begin position="133"/>
        <end position="153"/>
    </location>
</feature>
<feature type="transmembrane region" description="Helical" evidence="1">
    <location>
        <begin position="162"/>
        <end position="182"/>
    </location>
</feature>
<feature type="transmembrane region" description="Helical" evidence="1">
    <location>
        <begin position="185"/>
        <end position="205"/>
    </location>
</feature>
<feature type="transmembrane region" description="Helical" evidence="1">
    <location>
        <begin position="206"/>
        <end position="226"/>
    </location>
</feature>
<feature type="transmembrane region" description="Helical" evidence="1">
    <location>
        <begin position="245"/>
        <end position="265"/>
    </location>
</feature>
<feature type="transmembrane region" description="Helical" evidence="1">
    <location>
        <begin position="285"/>
        <end position="305"/>
    </location>
</feature>
<feature type="transmembrane region" description="Helical" evidence="1">
    <location>
        <begin position="326"/>
        <end position="346"/>
    </location>
</feature>
<feature type="transmembrane region" description="Helical" evidence="1">
    <location>
        <begin position="361"/>
        <end position="381"/>
    </location>
</feature>
<evidence type="ECO:0000255" key="1">
    <source>
        <dbReference type="HAMAP-Rule" id="MF_00913"/>
    </source>
</evidence>
<comment type="function">
    <text evidence="1">Peptidoglycan polymerase that is essential for cell division.</text>
</comment>
<comment type="catalytic activity">
    <reaction evidence="1">
        <text>[GlcNAc-(1-&gt;4)-Mur2Ac(oyl-L-Ala-gamma-D-Glu-L-Lys-D-Ala-D-Ala)](n)-di-trans,octa-cis-undecaprenyl diphosphate + beta-D-GlcNAc-(1-&gt;4)-Mur2Ac(oyl-L-Ala-gamma-D-Glu-L-Lys-D-Ala-D-Ala)-di-trans,octa-cis-undecaprenyl diphosphate = [GlcNAc-(1-&gt;4)-Mur2Ac(oyl-L-Ala-gamma-D-Glu-L-Lys-D-Ala-D-Ala)](n+1)-di-trans,octa-cis-undecaprenyl diphosphate + di-trans,octa-cis-undecaprenyl diphosphate + H(+)</text>
        <dbReference type="Rhea" id="RHEA:23708"/>
        <dbReference type="Rhea" id="RHEA-COMP:9602"/>
        <dbReference type="Rhea" id="RHEA-COMP:9603"/>
        <dbReference type="ChEBI" id="CHEBI:15378"/>
        <dbReference type="ChEBI" id="CHEBI:58405"/>
        <dbReference type="ChEBI" id="CHEBI:60033"/>
        <dbReference type="ChEBI" id="CHEBI:78435"/>
        <dbReference type="EC" id="2.4.99.28"/>
    </reaction>
</comment>
<comment type="pathway">
    <text evidence="1">Cell wall biogenesis; peptidoglycan biosynthesis.</text>
</comment>
<comment type="subcellular location">
    <subcellularLocation>
        <location evidence="1">Cell inner membrane</location>
        <topology evidence="1">Multi-pass membrane protein</topology>
    </subcellularLocation>
    <text evidence="1">Localizes to the division septum.</text>
</comment>
<comment type="similarity">
    <text evidence="1">Belongs to the SEDS family. FtsW subfamily.</text>
</comment>
<proteinExistence type="inferred from homology"/>
<name>FTSW_HALNC</name>
<protein>
    <recommendedName>
        <fullName evidence="1">Probable peptidoglycan glycosyltransferase FtsW</fullName>
        <shortName evidence="1">PGT</shortName>
        <ecNumber evidence="1">2.4.99.28</ecNumber>
    </recommendedName>
    <alternativeName>
        <fullName evidence="1">Cell division protein FtsW</fullName>
    </alternativeName>
    <alternativeName>
        <fullName evidence="1">Cell wall polymerase</fullName>
    </alternativeName>
    <alternativeName>
        <fullName evidence="1">Peptidoglycan polymerase</fullName>
        <shortName evidence="1">PG polymerase</shortName>
    </alternativeName>
</protein>
<reference key="1">
    <citation type="submission" date="2009-10" db="EMBL/GenBank/DDBJ databases">
        <title>Complete sequence of Halothiobacillus neapolitanus c2.</title>
        <authorList>
            <consortium name="US DOE Joint Genome Institute"/>
            <person name="Lucas S."/>
            <person name="Copeland A."/>
            <person name="Lapidus A."/>
            <person name="Glavina del Rio T."/>
            <person name="Tice H."/>
            <person name="Bruce D."/>
            <person name="Goodwin L."/>
            <person name="Pitluck S."/>
            <person name="Davenport K."/>
            <person name="Brettin T."/>
            <person name="Detter J.C."/>
            <person name="Han C."/>
            <person name="Tapia R."/>
            <person name="Larimer F."/>
            <person name="Land M."/>
            <person name="Hauser L."/>
            <person name="Kyrpides N."/>
            <person name="Mikhailova N."/>
            <person name="Kerfeld C."/>
            <person name="Cannon G."/>
            <person name="Heinhort S."/>
        </authorList>
    </citation>
    <scope>NUCLEOTIDE SEQUENCE [LARGE SCALE GENOMIC DNA]</scope>
    <source>
        <strain>ATCC 23641 / c2</strain>
    </source>
</reference>
<accession>D0KXY3</accession>
<gene>
    <name evidence="1" type="primary">ftsW</name>
    <name type="ordered locus">Hneap_0449</name>
</gene>
<sequence>MNRTVQKLLPWLTASAQDVEKVRNESIRLDPILMVAVLALLAWGLVMVTSASMELGERFGNPFFFVIRQTIAVVIGASITVWLVLRQPIALWVEYKLWILIASLLLLLVVLLPGIGHSVNGANRWIPLGPVNIQVSEFARLGLIIWMAGYIATHTIKLQNRITGMLGPGVVIFAASLLLLLQPDFGTTAVLAATLFAMAWLARAQWQMMVGSTLVMGVLGVFVVLSEQYRIERLLSFSNPFADPFGHGYQLANALIAIGTGGVWGRGLGESIQKLSYLPEAHTDFIFAVLAEELGLIGVIALIGLYGLIVWRGFVIANMAWKENQIAGAALAWGISVWIGMQALINMGVNMGVLPTKGLTLPLMSYGGSAMIVALISLGFLMRVHHEAAMVAELREAQMTKRQQDASIRTKEVLS</sequence>